<keyword id="KW-0175">Coiled coil</keyword>
<keyword id="KW-0256">Endoplasmic reticulum</keyword>
<keyword id="KW-0472">Membrane</keyword>
<keyword id="KW-0509">mRNA transport</keyword>
<keyword id="KW-1185">Reference proteome</keyword>
<keyword id="KW-0694">RNA-binding</keyword>
<keyword id="KW-0813">Transport</keyword>
<reference key="1">
    <citation type="journal article" date="2009" name="Nature">
        <title>Evolution of pathogenicity and sexual reproduction in eight Candida genomes.</title>
        <authorList>
            <person name="Butler G."/>
            <person name="Rasmussen M.D."/>
            <person name="Lin M.F."/>
            <person name="Santos M.A.S."/>
            <person name="Sakthikumar S."/>
            <person name="Munro C.A."/>
            <person name="Rheinbay E."/>
            <person name="Grabherr M."/>
            <person name="Forche A."/>
            <person name="Reedy J.L."/>
            <person name="Agrafioti I."/>
            <person name="Arnaud M.B."/>
            <person name="Bates S."/>
            <person name="Brown A.J.P."/>
            <person name="Brunke S."/>
            <person name="Costanzo M.C."/>
            <person name="Fitzpatrick D.A."/>
            <person name="de Groot P.W.J."/>
            <person name="Harris D."/>
            <person name="Hoyer L.L."/>
            <person name="Hube B."/>
            <person name="Klis F.M."/>
            <person name="Kodira C."/>
            <person name="Lennard N."/>
            <person name="Logue M.E."/>
            <person name="Martin R."/>
            <person name="Neiman A.M."/>
            <person name="Nikolaou E."/>
            <person name="Quail M.A."/>
            <person name="Quinn J."/>
            <person name="Santos M.C."/>
            <person name="Schmitzberger F.F."/>
            <person name="Sherlock G."/>
            <person name="Shah P."/>
            <person name="Silverstein K.A.T."/>
            <person name="Skrzypek M.S."/>
            <person name="Soll D."/>
            <person name="Staggs R."/>
            <person name="Stansfield I."/>
            <person name="Stumpf M.P.H."/>
            <person name="Sudbery P.E."/>
            <person name="Srikantha T."/>
            <person name="Zeng Q."/>
            <person name="Berman J."/>
            <person name="Berriman M."/>
            <person name="Heitman J."/>
            <person name="Gow N.A.R."/>
            <person name="Lorenz M.C."/>
            <person name="Birren B.W."/>
            <person name="Kellis M."/>
            <person name="Cuomo C.A."/>
        </authorList>
    </citation>
    <scope>NUCLEOTIDE SEQUENCE [LARGE SCALE GENOMIC DNA]</scope>
    <source>
        <strain>ATCC 11503 / BCRC 21390 / CBS 2605 / JCM 1781 / NBRC 1676 / NRRL YB-4239</strain>
    </source>
</reference>
<protein>
    <recommendedName>
        <fullName>SWI5-dependent HO expression protein 3</fullName>
    </recommendedName>
</protein>
<name>SHE3_LODEL</name>
<comment type="function">
    <text evidence="1">RNA-binding protein that binds specific mRNAs including the ASH1 mRNA, coding for a repressor of the HO endonuclease. Part of the mRNA localization machinery that restricts accumulation of certain proteins to the bud and in the daughter cell. Required for the delivery of cortical endoplasmic reticulum into the emerging bud (By similarity).</text>
</comment>
<comment type="subcellular location">
    <subcellularLocation>
        <location evidence="1">Endoplasmic reticulum membrane</location>
        <topology evidence="1">Peripheral membrane protein</topology>
    </subcellularLocation>
</comment>
<comment type="similarity">
    <text evidence="4">Belongs to the SHE3 family.</text>
</comment>
<dbReference type="EMBL" id="CH981530">
    <property type="protein sequence ID" value="EDK46807.1"/>
    <property type="molecule type" value="Genomic_DNA"/>
</dbReference>
<dbReference type="RefSeq" id="XP_001524175.1">
    <property type="nucleotide sequence ID" value="XM_001524125.1"/>
</dbReference>
<dbReference type="SMR" id="A5E5U9"/>
<dbReference type="STRING" id="379508.A5E5U9"/>
<dbReference type="GeneID" id="5230987"/>
<dbReference type="KEGG" id="lel:PVL30_005730"/>
<dbReference type="VEuPathDB" id="FungiDB:LELG_04988"/>
<dbReference type="eggNOG" id="ENOG502QSQX">
    <property type="taxonomic scope" value="Eukaryota"/>
</dbReference>
<dbReference type="HOGENOM" id="CLU_042310_0_0_1"/>
<dbReference type="InParanoid" id="A5E5U9"/>
<dbReference type="OrthoDB" id="6088208at2759"/>
<dbReference type="Proteomes" id="UP000001996">
    <property type="component" value="Unassembled WGS sequence"/>
</dbReference>
<dbReference type="GO" id="GO:0005789">
    <property type="term" value="C:endoplasmic reticulum membrane"/>
    <property type="evidence" value="ECO:0007669"/>
    <property type="project" value="UniProtKB-SubCell"/>
</dbReference>
<dbReference type="GO" id="GO:0003723">
    <property type="term" value="F:RNA binding"/>
    <property type="evidence" value="ECO:0007669"/>
    <property type="project" value="UniProtKB-KW"/>
</dbReference>
<dbReference type="GO" id="GO:0048309">
    <property type="term" value="P:endoplasmic reticulum inheritance"/>
    <property type="evidence" value="ECO:0007669"/>
    <property type="project" value="InterPro"/>
</dbReference>
<dbReference type="GO" id="GO:0051028">
    <property type="term" value="P:mRNA transport"/>
    <property type="evidence" value="ECO:0007669"/>
    <property type="project" value="UniProtKB-KW"/>
</dbReference>
<dbReference type="InterPro" id="IPR031398">
    <property type="entry name" value="She3"/>
</dbReference>
<dbReference type="Pfam" id="PF17078">
    <property type="entry name" value="SHE3"/>
    <property type="match status" value="1"/>
</dbReference>
<accession>A5E5U9</accession>
<proteinExistence type="inferred from homology"/>
<sequence length="500" mass="55370">MAGDSASLSLSPIKSDKAAVVSESPVKMKPGSSSSKVIDTLHTTIDSLSLEIATLKQTNQELSRKSQVATAKNDSFVDQLANLKHENDMLSALLKRKERRILDLEDQNSELSNSVESLNMLTKQMKMRCEKLSDSSMQSMAEYERLKISYDALVASCNEYKQHYKTELDTLQKSLDTYKQENHKQWETLNELISSNDKDIDTLLDSLNNKKKLMDNIYVNKNTKVLTMLSTLATLVKAHGTESKNVLGDNAQTIEFLLEKYPDLEEKILEKEQIEIDINSILYASKDALENTSFDEEDVTLINSPELEPSSDGNFPAQQLQKRNNVGNQQTSNSNNSNNSNSNSSSNSNSNSNSNNGSSNHAQNKRKGKRTPLSGNSPSVHMPSMWSNNSSSSSTSHTPFNSQNQNNHHHNSHHQQQLHARSNNTNKSYGNLSHDLQHGHLPKKHAAINNITNTYSRSSGGGGGGHNSGNNNGPNAASNSNNNNNRRRSGYYKKAVSSQT</sequence>
<gene>
    <name type="primary">SHE3</name>
    <name type="ORF">LELG_04988</name>
</gene>
<feature type="chain" id="PRO_0000408934" description="SWI5-dependent HO expression protein 3">
    <location>
        <begin position="1"/>
        <end position="500"/>
    </location>
</feature>
<feature type="region of interest" description="Disordered" evidence="3">
    <location>
        <begin position="1"/>
        <end position="35"/>
    </location>
</feature>
<feature type="region of interest" description="Disordered" evidence="3">
    <location>
        <begin position="324"/>
        <end position="437"/>
    </location>
</feature>
<feature type="region of interest" description="Disordered" evidence="3">
    <location>
        <begin position="453"/>
        <end position="500"/>
    </location>
</feature>
<feature type="coiled-coil region" evidence="2">
    <location>
        <begin position="41"/>
        <end position="185"/>
    </location>
</feature>
<feature type="compositionally biased region" description="Polar residues" evidence="3">
    <location>
        <begin position="1"/>
        <end position="12"/>
    </location>
</feature>
<feature type="compositionally biased region" description="Low complexity" evidence="3">
    <location>
        <begin position="332"/>
        <end position="360"/>
    </location>
</feature>
<feature type="compositionally biased region" description="Low complexity" evidence="3">
    <location>
        <begin position="381"/>
        <end position="406"/>
    </location>
</feature>
<feature type="compositionally biased region" description="Polar residues" evidence="3">
    <location>
        <begin position="418"/>
        <end position="431"/>
    </location>
</feature>
<feature type="compositionally biased region" description="Low complexity" evidence="3">
    <location>
        <begin position="468"/>
        <end position="484"/>
    </location>
</feature>
<organism>
    <name type="scientific">Lodderomyces elongisporus (strain ATCC 11503 / CBS 2605 / JCM 1781 / NBRC 1676 / NRRL YB-4239)</name>
    <name type="common">Yeast</name>
    <name type="synonym">Saccharomyces elongisporus</name>
    <dbReference type="NCBI Taxonomy" id="379508"/>
    <lineage>
        <taxon>Eukaryota</taxon>
        <taxon>Fungi</taxon>
        <taxon>Dikarya</taxon>
        <taxon>Ascomycota</taxon>
        <taxon>Saccharomycotina</taxon>
        <taxon>Pichiomycetes</taxon>
        <taxon>Debaryomycetaceae</taxon>
        <taxon>Candida/Lodderomyces clade</taxon>
        <taxon>Lodderomyces</taxon>
    </lineage>
</organism>
<evidence type="ECO:0000250" key="1"/>
<evidence type="ECO:0000255" key="2"/>
<evidence type="ECO:0000256" key="3">
    <source>
        <dbReference type="SAM" id="MobiDB-lite"/>
    </source>
</evidence>
<evidence type="ECO:0000305" key="4"/>